<comment type="function">
    <text evidence="1">Catalyzes the 2'-O-methylation at nucleotide C2498 in 23S rRNA.</text>
</comment>
<comment type="catalytic activity">
    <reaction evidence="1">
        <text>cytidine(2498) in 23S rRNA + S-adenosyl-L-methionine = 2'-O-methylcytidine(2498) in 23S rRNA + S-adenosyl-L-homocysteine + H(+)</text>
        <dbReference type="Rhea" id="RHEA:42788"/>
        <dbReference type="Rhea" id="RHEA-COMP:10244"/>
        <dbReference type="Rhea" id="RHEA-COMP:10245"/>
        <dbReference type="ChEBI" id="CHEBI:15378"/>
        <dbReference type="ChEBI" id="CHEBI:57856"/>
        <dbReference type="ChEBI" id="CHEBI:59789"/>
        <dbReference type="ChEBI" id="CHEBI:74495"/>
        <dbReference type="ChEBI" id="CHEBI:82748"/>
        <dbReference type="EC" id="2.1.1.186"/>
    </reaction>
</comment>
<comment type="subunit">
    <text evidence="1">Monomer.</text>
</comment>
<comment type="subcellular location">
    <subcellularLocation>
        <location evidence="1">Cytoplasm</location>
    </subcellularLocation>
</comment>
<comment type="similarity">
    <text evidence="1">Belongs to the class I-like SAM-binding methyltransferase superfamily. RNA methyltransferase RlmE family. RlmM subfamily.</text>
</comment>
<evidence type="ECO:0000255" key="1">
    <source>
        <dbReference type="HAMAP-Rule" id="MF_01551"/>
    </source>
</evidence>
<sequence>MSVVFLLQTRPGFERDAQQEARTVALERRGLELKPVETGEGFVLLQSDAPLTPFGWRDLAFSRTLSRVIADIQLGDRDRLTPILDVVGQKAMTFASIWLEWPDTNDGKAMSGFARKFQPLLEEKLATAGRLGQDASTRLQLFFPSKSRVLVSVSEPQWGAPWPLGILRLRMPTDAPSRSTLKLAEAFEVFLGEQGQQDKLKPGMTAVDLGAAPGGWTWQLLRRGIKVYAVDNGPMKGSCDGHPLVKHLRQDGFRFRPPHPVDWLVCDMVERPGRVAELMADWLAEGAARQAVFNLKLPMKKRAEALSDALERIEARMLAAGLAYTLQVKQLYHDREEVTVYLARPAATGRRRR</sequence>
<feature type="chain" id="PRO_0000388985" description="Ribosomal RNA large subunit methyltransferase M">
    <location>
        <begin position="1"/>
        <end position="353"/>
    </location>
</feature>
<feature type="active site" description="Proton acceptor" evidence="1">
    <location>
        <position position="296"/>
    </location>
</feature>
<feature type="binding site" evidence="1">
    <location>
        <position position="179"/>
    </location>
    <ligand>
        <name>S-adenosyl-L-methionine</name>
        <dbReference type="ChEBI" id="CHEBI:59789"/>
    </ligand>
</feature>
<feature type="binding site" evidence="1">
    <location>
        <begin position="212"/>
        <end position="215"/>
    </location>
    <ligand>
        <name>S-adenosyl-L-methionine</name>
        <dbReference type="ChEBI" id="CHEBI:59789"/>
    </ligand>
</feature>
<feature type="binding site" evidence="1">
    <location>
        <position position="231"/>
    </location>
    <ligand>
        <name>S-adenosyl-L-methionine</name>
        <dbReference type="ChEBI" id="CHEBI:59789"/>
    </ligand>
</feature>
<feature type="binding site" evidence="1">
    <location>
        <position position="251"/>
    </location>
    <ligand>
        <name>S-adenosyl-L-methionine</name>
        <dbReference type="ChEBI" id="CHEBI:59789"/>
    </ligand>
</feature>
<feature type="binding site" evidence="1">
    <location>
        <position position="267"/>
    </location>
    <ligand>
        <name>S-adenosyl-L-methionine</name>
        <dbReference type="ChEBI" id="CHEBI:59789"/>
    </ligand>
</feature>
<proteinExistence type="inferred from homology"/>
<dbReference type="EC" id="2.1.1.186" evidence="1"/>
<dbReference type="EMBL" id="CP001154">
    <property type="protein sequence ID" value="ACO75391.1"/>
    <property type="molecule type" value="Genomic_DNA"/>
</dbReference>
<dbReference type="RefSeq" id="WP_012697877.1">
    <property type="nucleotide sequence ID" value="NC_012559.1"/>
</dbReference>
<dbReference type="SMR" id="C1DB52"/>
<dbReference type="STRING" id="557598.LHK_02409"/>
<dbReference type="KEGG" id="lhk:LHK_02409"/>
<dbReference type="eggNOG" id="COG2933">
    <property type="taxonomic scope" value="Bacteria"/>
</dbReference>
<dbReference type="HOGENOM" id="CLU_043780_0_0_4"/>
<dbReference type="Proteomes" id="UP000002010">
    <property type="component" value="Chromosome"/>
</dbReference>
<dbReference type="GO" id="GO:0005737">
    <property type="term" value="C:cytoplasm"/>
    <property type="evidence" value="ECO:0007669"/>
    <property type="project" value="UniProtKB-SubCell"/>
</dbReference>
<dbReference type="GO" id="GO:0008757">
    <property type="term" value="F:S-adenosylmethionine-dependent methyltransferase activity"/>
    <property type="evidence" value="ECO:0007669"/>
    <property type="project" value="UniProtKB-UniRule"/>
</dbReference>
<dbReference type="GO" id="GO:0032259">
    <property type="term" value="P:methylation"/>
    <property type="evidence" value="ECO:0007669"/>
    <property type="project" value="UniProtKB-KW"/>
</dbReference>
<dbReference type="GO" id="GO:0006364">
    <property type="term" value="P:rRNA processing"/>
    <property type="evidence" value="ECO:0007669"/>
    <property type="project" value="UniProtKB-UniRule"/>
</dbReference>
<dbReference type="Gene3D" id="3.30.2300.20">
    <property type="match status" value="1"/>
</dbReference>
<dbReference type="Gene3D" id="3.40.50.150">
    <property type="entry name" value="Vaccinia Virus protein VP39"/>
    <property type="match status" value="1"/>
</dbReference>
<dbReference type="HAMAP" id="MF_01551">
    <property type="entry name" value="23SrRNA_methyltr_M"/>
    <property type="match status" value="1"/>
</dbReference>
<dbReference type="InterPro" id="IPR048646">
    <property type="entry name" value="RlmM_THUMP-like"/>
</dbReference>
<dbReference type="InterPro" id="IPR002877">
    <property type="entry name" value="RNA_MeTrfase_FtsJ_dom"/>
</dbReference>
<dbReference type="InterPro" id="IPR011224">
    <property type="entry name" value="rRNA_MeTrfase_M"/>
</dbReference>
<dbReference type="InterPro" id="IPR029063">
    <property type="entry name" value="SAM-dependent_MTases_sf"/>
</dbReference>
<dbReference type="NCBIfam" id="NF008734">
    <property type="entry name" value="PRK11760.1"/>
    <property type="match status" value="1"/>
</dbReference>
<dbReference type="PANTHER" id="PTHR37524">
    <property type="entry name" value="RIBOSOMAL RNA LARGE SUBUNIT METHYLTRANSFERASE M"/>
    <property type="match status" value="1"/>
</dbReference>
<dbReference type="PANTHER" id="PTHR37524:SF2">
    <property type="entry name" value="RIBOSOMAL RNA METHYLTRANSFERASE FTSJ DOMAIN-CONTAINING PROTEIN"/>
    <property type="match status" value="1"/>
</dbReference>
<dbReference type="Pfam" id="PF01728">
    <property type="entry name" value="FtsJ"/>
    <property type="match status" value="1"/>
</dbReference>
<dbReference type="Pfam" id="PF21239">
    <property type="entry name" value="RLMM_N"/>
    <property type="match status" value="1"/>
</dbReference>
<dbReference type="PIRSF" id="PIRSF028774">
    <property type="entry name" value="UCP028774"/>
    <property type="match status" value="1"/>
</dbReference>
<dbReference type="SUPFAM" id="SSF53335">
    <property type="entry name" value="S-adenosyl-L-methionine-dependent methyltransferases"/>
    <property type="match status" value="1"/>
</dbReference>
<accession>C1DB52</accession>
<protein>
    <recommendedName>
        <fullName evidence="1">Ribosomal RNA large subunit methyltransferase M</fullName>
        <ecNumber evidence="1">2.1.1.186</ecNumber>
    </recommendedName>
    <alternativeName>
        <fullName evidence="1">23S rRNA (cytidine2498-2'-O)-methyltransferase</fullName>
    </alternativeName>
    <alternativeName>
        <fullName evidence="1">23S rRNA 2'-O-ribose methyltransferase RlmM</fullName>
    </alternativeName>
</protein>
<organism>
    <name type="scientific">Laribacter hongkongensis (strain HLHK9)</name>
    <dbReference type="NCBI Taxonomy" id="557598"/>
    <lineage>
        <taxon>Bacteria</taxon>
        <taxon>Pseudomonadati</taxon>
        <taxon>Pseudomonadota</taxon>
        <taxon>Betaproteobacteria</taxon>
        <taxon>Neisseriales</taxon>
        <taxon>Aquaspirillaceae</taxon>
        <taxon>Laribacter</taxon>
    </lineage>
</organism>
<gene>
    <name evidence="1" type="primary">rlmM</name>
    <name type="ordered locus">LHK_02409</name>
</gene>
<keyword id="KW-0963">Cytoplasm</keyword>
<keyword id="KW-0489">Methyltransferase</keyword>
<keyword id="KW-1185">Reference proteome</keyword>
<keyword id="KW-0698">rRNA processing</keyword>
<keyword id="KW-0949">S-adenosyl-L-methionine</keyword>
<keyword id="KW-0808">Transferase</keyword>
<reference key="1">
    <citation type="journal article" date="2009" name="PLoS Genet.">
        <title>The complete genome and proteome of Laribacter hongkongensis reveal potential mechanisms for adaptations to different temperatures and habitats.</title>
        <authorList>
            <person name="Woo P.C.Y."/>
            <person name="Lau S.K.P."/>
            <person name="Tse H."/>
            <person name="Teng J.L.L."/>
            <person name="Curreem S.O."/>
            <person name="Tsang A.K.L."/>
            <person name="Fan R.Y.Y."/>
            <person name="Wong G.K.M."/>
            <person name="Huang Y."/>
            <person name="Loman N.J."/>
            <person name="Snyder L.A.S."/>
            <person name="Cai J.J."/>
            <person name="Huang J.-D."/>
            <person name="Mak W."/>
            <person name="Pallen M.J."/>
            <person name="Lok S."/>
            <person name="Yuen K.-Y."/>
        </authorList>
    </citation>
    <scope>NUCLEOTIDE SEQUENCE [LARGE SCALE GENOMIC DNA]</scope>
    <source>
        <strain>HLHK9</strain>
    </source>
</reference>
<name>RLMM_LARHH</name>